<accession>Q9I5U6</accession>
<protein>
    <recommendedName>
        <fullName evidence="1">Protein ApaG</fullName>
    </recommendedName>
</protein>
<name>APAG_PSEAE</name>
<organism>
    <name type="scientific">Pseudomonas aeruginosa (strain ATCC 15692 / DSM 22644 / CIP 104116 / JCM 14847 / LMG 12228 / 1C / PRS 101 / PAO1)</name>
    <dbReference type="NCBI Taxonomy" id="208964"/>
    <lineage>
        <taxon>Bacteria</taxon>
        <taxon>Pseudomonadati</taxon>
        <taxon>Pseudomonadota</taxon>
        <taxon>Gammaproteobacteria</taxon>
        <taxon>Pseudomonadales</taxon>
        <taxon>Pseudomonadaceae</taxon>
        <taxon>Pseudomonas</taxon>
    </lineage>
</organism>
<reference key="1">
    <citation type="journal article" date="2000" name="Nature">
        <title>Complete genome sequence of Pseudomonas aeruginosa PAO1, an opportunistic pathogen.</title>
        <authorList>
            <person name="Stover C.K."/>
            <person name="Pham X.-Q.T."/>
            <person name="Erwin A.L."/>
            <person name="Mizoguchi S.D."/>
            <person name="Warrener P."/>
            <person name="Hickey M.J."/>
            <person name="Brinkman F.S.L."/>
            <person name="Hufnagle W.O."/>
            <person name="Kowalik D.J."/>
            <person name="Lagrou M."/>
            <person name="Garber R.L."/>
            <person name="Goltry L."/>
            <person name="Tolentino E."/>
            <person name="Westbrock-Wadman S."/>
            <person name="Yuan Y."/>
            <person name="Brody L.L."/>
            <person name="Coulter S.N."/>
            <person name="Folger K.R."/>
            <person name="Kas A."/>
            <person name="Larbig K."/>
            <person name="Lim R.M."/>
            <person name="Smith K.A."/>
            <person name="Spencer D.H."/>
            <person name="Wong G.K.-S."/>
            <person name="Wu Z."/>
            <person name="Paulsen I.T."/>
            <person name="Reizer J."/>
            <person name="Saier M.H. Jr."/>
            <person name="Hancock R.E.W."/>
            <person name="Lory S."/>
            <person name="Olson M.V."/>
        </authorList>
    </citation>
    <scope>NUCLEOTIDE SEQUENCE [LARGE SCALE GENOMIC DNA]</scope>
    <source>
        <strain>ATCC 15692 / DSM 22644 / CIP 104116 / JCM 14847 / LMG 12228 / 1C / PRS 101 / PAO1</strain>
    </source>
</reference>
<proteinExistence type="inferred from homology"/>
<keyword id="KW-1185">Reference proteome</keyword>
<evidence type="ECO:0000255" key="1">
    <source>
        <dbReference type="HAMAP-Rule" id="MF_00791"/>
    </source>
</evidence>
<dbReference type="EMBL" id="AE004091">
    <property type="protein sequence ID" value="AAG03980.1"/>
    <property type="molecule type" value="Genomic_DNA"/>
</dbReference>
<dbReference type="PIR" id="G83571">
    <property type="entry name" value="G83571"/>
</dbReference>
<dbReference type="RefSeq" id="NP_249282.1">
    <property type="nucleotide sequence ID" value="NC_002516.2"/>
</dbReference>
<dbReference type="RefSeq" id="WP_003085085.1">
    <property type="nucleotide sequence ID" value="NZ_QZGE01000010.1"/>
</dbReference>
<dbReference type="SMR" id="Q9I5U6"/>
<dbReference type="FunCoup" id="Q9I5U6">
    <property type="interactions" value="16"/>
</dbReference>
<dbReference type="STRING" id="208964.PA0591"/>
<dbReference type="PaxDb" id="208964-PA0591"/>
<dbReference type="DNASU" id="880916"/>
<dbReference type="GeneID" id="880916"/>
<dbReference type="KEGG" id="pae:PA0591"/>
<dbReference type="PATRIC" id="fig|208964.12.peg.627"/>
<dbReference type="PseudoCAP" id="PA0591"/>
<dbReference type="HOGENOM" id="CLU_128074_0_0_6"/>
<dbReference type="InParanoid" id="Q9I5U6"/>
<dbReference type="OrthoDB" id="9795226at2"/>
<dbReference type="PhylomeDB" id="Q9I5U6"/>
<dbReference type="BioCyc" id="PAER208964:G1FZ6-598-MONOMER"/>
<dbReference type="Proteomes" id="UP000002438">
    <property type="component" value="Chromosome"/>
</dbReference>
<dbReference type="GO" id="GO:0070987">
    <property type="term" value="P:error-free translesion synthesis"/>
    <property type="evidence" value="ECO:0000318"/>
    <property type="project" value="GO_Central"/>
</dbReference>
<dbReference type="Gene3D" id="2.60.40.1470">
    <property type="entry name" value="ApaG domain"/>
    <property type="match status" value="1"/>
</dbReference>
<dbReference type="HAMAP" id="MF_00791">
    <property type="entry name" value="ApaG"/>
    <property type="match status" value="1"/>
</dbReference>
<dbReference type="InterPro" id="IPR007474">
    <property type="entry name" value="ApaG_domain"/>
</dbReference>
<dbReference type="InterPro" id="IPR036767">
    <property type="entry name" value="ApaG_sf"/>
</dbReference>
<dbReference type="InterPro" id="IPR023065">
    <property type="entry name" value="Uncharacterised_ApaG"/>
</dbReference>
<dbReference type="NCBIfam" id="NF003967">
    <property type="entry name" value="PRK05461.1"/>
    <property type="match status" value="1"/>
</dbReference>
<dbReference type="PANTHER" id="PTHR14289">
    <property type="entry name" value="F-BOX ONLY PROTEIN 3"/>
    <property type="match status" value="1"/>
</dbReference>
<dbReference type="PANTHER" id="PTHR14289:SF16">
    <property type="entry name" value="POLYMERASE DELTA-INTERACTING PROTEIN 2"/>
    <property type="match status" value="1"/>
</dbReference>
<dbReference type="Pfam" id="PF04379">
    <property type="entry name" value="DUF525"/>
    <property type="match status" value="1"/>
</dbReference>
<dbReference type="SUPFAM" id="SSF110069">
    <property type="entry name" value="ApaG-like"/>
    <property type="match status" value="1"/>
</dbReference>
<dbReference type="PROSITE" id="PS51087">
    <property type="entry name" value="APAG"/>
    <property type="match status" value="1"/>
</dbReference>
<sequence>MSDTQHQVNVRVDTRYLPEQSAPEQNRFAFAYTVTIENQGEVPAQLLSRHWIITDGDGRTQEVRGAGVVGEQPLIAPGAQHTYTSGTVLATRVGSMRGSYQMLGSDGIAFDAAIPVFRLAVPGALH</sequence>
<feature type="chain" id="PRO_0000197953" description="Protein ApaG">
    <location>
        <begin position="1"/>
        <end position="126"/>
    </location>
</feature>
<feature type="domain" description="ApaG" evidence="1">
    <location>
        <begin position="2"/>
        <end position="126"/>
    </location>
</feature>
<gene>
    <name evidence="1" type="primary">apaG</name>
    <name type="ordered locus">PA0591</name>
</gene>